<dbReference type="EMBL" id="AF152562">
    <property type="protein sequence ID" value="AAD34156.1"/>
    <property type="molecule type" value="mRNA"/>
</dbReference>
<dbReference type="EMBL" id="AY358273">
    <property type="protein sequence ID" value="AAQ88640.1"/>
    <property type="molecule type" value="mRNA"/>
</dbReference>
<dbReference type="EMBL" id="AK315304">
    <property type="protein sequence ID" value="BAG37708.1"/>
    <property type="molecule type" value="mRNA"/>
</dbReference>
<dbReference type="EMBL" id="AY569015">
    <property type="protein sequence ID" value="AAS66984.1"/>
    <property type="molecule type" value="Genomic_DNA"/>
</dbReference>
<dbReference type="EMBL" id="FJ515851">
    <property type="protein sequence ID" value="ACS13743.1"/>
    <property type="molecule type" value="Genomic_DNA"/>
</dbReference>
<dbReference type="EMBL" id="CH471059">
    <property type="protein sequence ID" value="EAX06583.1"/>
    <property type="molecule type" value="Genomic_DNA"/>
</dbReference>
<dbReference type="EMBL" id="BC007059">
    <property type="protein sequence ID" value="AAH07059.1"/>
    <property type="status" value="ALT_SEQ"/>
    <property type="molecule type" value="mRNA"/>
</dbReference>
<dbReference type="EMBL" id="BC058287">
    <property type="protein sequence ID" value="AAH58287.1"/>
    <property type="molecule type" value="mRNA"/>
</dbReference>
<dbReference type="CCDS" id="CCDS622.1"/>
<dbReference type="RefSeq" id="NP_055310.1">
    <property type="nucleotide sequence ID" value="NM_014495.4"/>
</dbReference>
<dbReference type="PDB" id="6EUA">
    <property type="method" value="X-ray"/>
    <property type="resolution" value="2.10 A"/>
    <property type="chains" value="A/B/C=242-460"/>
</dbReference>
<dbReference type="PDBsum" id="6EUA"/>
<dbReference type="SASBDB" id="Q9Y5C1"/>
<dbReference type="SMR" id="Q9Y5C1"/>
<dbReference type="BioGRID" id="118143">
    <property type="interactions" value="9"/>
</dbReference>
<dbReference type="FunCoup" id="Q9Y5C1">
    <property type="interactions" value="66"/>
</dbReference>
<dbReference type="IntAct" id="Q9Y5C1">
    <property type="interactions" value="7"/>
</dbReference>
<dbReference type="STRING" id="9606.ENSP00000360170"/>
<dbReference type="ChEMBL" id="CHEMBL3710485"/>
<dbReference type="DrugBank" id="DB15354">
    <property type="generic name" value="Evinacumab"/>
</dbReference>
<dbReference type="DrugCentral" id="Q9Y5C1"/>
<dbReference type="UniLectin" id="Q9Y5C1"/>
<dbReference type="GlyConnect" id="1010">
    <property type="glycosylation" value="2 N-Linked glycans (3 sites)"/>
</dbReference>
<dbReference type="GlyCosmos" id="Q9Y5C1">
    <property type="glycosylation" value="8 sites, 5 glycans"/>
</dbReference>
<dbReference type="GlyGen" id="Q9Y5C1">
    <property type="glycosylation" value="8 sites, 13 N-linked glycans (3 sites), 3 O-linked glycans (3 sites)"/>
</dbReference>
<dbReference type="iPTMnet" id="Q9Y5C1"/>
<dbReference type="PhosphoSitePlus" id="Q9Y5C1"/>
<dbReference type="BioMuta" id="ANGPTL3"/>
<dbReference type="DMDM" id="25008126"/>
<dbReference type="MassIVE" id="Q9Y5C1"/>
<dbReference type="PaxDb" id="9606-ENSP00000360170"/>
<dbReference type="PeptideAtlas" id="Q9Y5C1"/>
<dbReference type="ProteomicsDB" id="86339"/>
<dbReference type="ABCD" id="Q9Y5C1">
    <property type="antibodies" value="1 sequenced antibody"/>
</dbReference>
<dbReference type="Antibodypedia" id="19489">
    <property type="antibodies" value="519 antibodies from 41 providers"/>
</dbReference>
<dbReference type="DNASU" id="27329"/>
<dbReference type="Ensembl" id="ENST00000371129.4">
    <property type="protein sequence ID" value="ENSP00000360170.3"/>
    <property type="gene ID" value="ENSG00000132855.5"/>
</dbReference>
<dbReference type="GeneID" id="27329"/>
<dbReference type="KEGG" id="hsa:27329"/>
<dbReference type="MANE-Select" id="ENST00000371129.4">
    <property type="protein sequence ID" value="ENSP00000360170.3"/>
    <property type="RefSeq nucleotide sequence ID" value="NM_014495.4"/>
    <property type="RefSeq protein sequence ID" value="NP_055310.1"/>
</dbReference>
<dbReference type="UCSC" id="uc001das.3">
    <property type="organism name" value="human"/>
</dbReference>
<dbReference type="AGR" id="HGNC:491"/>
<dbReference type="CTD" id="27329"/>
<dbReference type="DisGeNET" id="27329"/>
<dbReference type="GeneCards" id="ANGPTL3"/>
<dbReference type="GeneReviews" id="ANGPTL3"/>
<dbReference type="HGNC" id="HGNC:491">
    <property type="gene designation" value="ANGPTL3"/>
</dbReference>
<dbReference type="HPA" id="ENSG00000132855">
    <property type="expression patterns" value="Tissue enriched (liver)"/>
</dbReference>
<dbReference type="MalaCards" id="ANGPTL3"/>
<dbReference type="MIM" id="604774">
    <property type="type" value="gene"/>
</dbReference>
<dbReference type="MIM" id="605019">
    <property type="type" value="phenotype"/>
</dbReference>
<dbReference type="neXtProt" id="NX_Q9Y5C1"/>
<dbReference type="OpenTargets" id="ENSG00000132855"/>
<dbReference type="PharmGKB" id="PA24796"/>
<dbReference type="VEuPathDB" id="HostDB:ENSG00000132855"/>
<dbReference type="eggNOG" id="KOG2579">
    <property type="taxonomic scope" value="Eukaryota"/>
</dbReference>
<dbReference type="GeneTree" id="ENSGT00940000156746"/>
<dbReference type="HOGENOM" id="CLU_038628_2_0_1"/>
<dbReference type="InParanoid" id="Q9Y5C1"/>
<dbReference type="OMA" id="WKEEKHW"/>
<dbReference type="OrthoDB" id="8866652at2759"/>
<dbReference type="PAN-GO" id="Q9Y5C1">
    <property type="GO annotations" value="8 GO annotations based on evolutionary models"/>
</dbReference>
<dbReference type="PhylomeDB" id="Q9Y5C1"/>
<dbReference type="TreeFam" id="TF336658"/>
<dbReference type="PathwayCommons" id="Q9Y5C1"/>
<dbReference type="Reactome" id="R-HSA-8963889">
    <property type="pathway name" value="Assembly of active LPL and LIPC lipase complexes"/>
</dbReference>
<dbReference type="Reactome" id="R-HSA-9029558">
    <property type="pathway name" value="NR1H2 &amp; NR1H3 regulate gene expression linked to lipogenesis"/>
</dbReference>
<dbReference type="SignaLink" id="Q9Y5C1"/>
<dbReference type="BioGRID-ORCS" id="27329">
    <property type="hits" value="33 hits in 1144 CRISPR screens"/>
</dbReference>
<dbReference type="ChiTaRS" id="ANGPTL3">
    <property type="organism name" value="human"/>
</dbReference>
<dbReference type="GeneWiki" id="ANGPTL3"/>
<dbReference type="GenomeRNAi" id="27329"/>
<dbReference type="Pharos" id="Q9Y5C1">
    <property type="development level" value="Tclin"/>
</dbReference>
<dbReference type="PRO" id="PR:Q9Y5C1"/>
<dbReference type="Proteomes" id="UP000005640">
    <property type="component" value="Chromosome 1"/>
</dbReference>
<dbReference type="RNAct" id="Q9Y5C1">
    <property type="molecule type" value="protein"/>
</dbReference>
<dbReference type="Bgee" id="ENSG00000132855">
    <property type="expression patterns" value="Expressed in right lobe of liver and 109 other cell types or tissues"/>
</dbReference>
<dbReference type="GO" id="GO:0009986">
    <property type="term" value="C:cell surface"/>
    <property type="evidence" value="ECO:0000314"/>
    <property type="project" value="BHF-UCL"/>
</dbReference>
<dbReference type="GO" id="GO:0062023">
    <property type="term" value="C:collagen-containing extracellular matrix"/>
    <property type="evidence" value="ECO:0000318"/>
    <property type="project" value="GO_Central"/>
</dbReference>
<dbReference type="GO" id="GO:0005769">
    <property type="term" value="C:early endosome"/>
    <property type="evidence" value="ECO:0007669"/>
    <property type="project" value="Ensembl"/>
</dbReference>
<dbReference type="GO" id="GO:0005576">
    <property type="term" value="C:extracellular region"/>
    <property type="evidence" value="ECO:0000304"/>
    <property type="project" value="Reactome"/>
</dbReference>
<dbReference type="GO" id="GO:0005615">
    <property type="term" value="C:extracellular space"/>
    <property type="evidence" value="ECO:0000314"/>
    <property type="project" value="BHF-UCL"/>
</dbReference>
<dbReference type="GO" id="GO:0005794">
    <property type="term" value="C:Golgi apparatus"/>
    <property type="evidence" value="ECO:0007669"/>
    <property type="project" value="Ensembl"/>
</dbReference>
<dbReference type="GO" id="GO:0030027">
    <property type="term" value="C:lamellipodium"/>
    <property type="evidence" value="ECO:0007669"/>
    <property type="project" value="UniProtKB-SubCell"/>
</dbReference>
<dbReference type="GO" id="GO:0004857">
    <property type="term" value="F:enzyme inhibitor activity"/>
    <property type="evidence" value="ECO:0000250"/>
    <property type="project" value="UniProtKB"/>
</dbReference>
<dbReference type="GO" id="GO:0008083">
    <property type="term" value="F:growth factor activity"/>
    <property type="evidence" value="ECO:0000314"/>
    <property type="project" value="BHF-UCL"/>
</dbReference>
<dbReference type="GO" id="GO:0008201">
    <property type="term" value="F:heparin binding"/>
    <property type="evidence" value="ECO:0007669"/>
    <property type="project" value="UniProtKB-KW"/>
</dbReference>
<dbReference type="GO" id="GO:0005178">
    <property type="term" value="F:integrin binding"/>
    <property type="evidence" value="ECO:0000353"/>
    <property type="project" value="UniProtKB"/>
</dbReference>
<dbReference type="GO" id="GO:0035473">
    <property type="term" value="F:lipase binding"/>
    <property type="evidence" value="ECO:0000353"/>
    <property type="project" value="BHF-UCL"/>
</dbReference>
<dbReference type="GO" id="GO:0055102">
    <property type="term" value="F:lipase inhibitor activity"/>
    <property type="evidence" value="ECO:0000314"/>
    <property type="project" value="BHF-UCL"/>
</dbReference>
<dbReference type="GO" id="GO:0004859">
    <property type="term" value="F:phospholipase inhibitor activity"/>
    <property type="evidence" value="ECO:0000314"/>
    <property type="project" value="BHF-UCL"/>
</dbReference>
<dbReference type="GO" id="GO:0055090">
    <property type="term" value="P:acylglycerol homeostasis"/>
    <property type="evidence" value="ECO:0000314"/>
    <property type="project" value="BHF-UCL"/>
</dbReference>
<dbReference type="GO" id="GO:0001525">
    <property type="term" value="P:angiogenesis"/>
    <property type="evidence" value="ECO:0007669"/>
    <property type="project" value="UniProtKB-KW"/>
</dbReference>
<dbReference type="GO" id="GO:0048844">
    <property type="term" value="P:artery morphogenesis"/>
    <property type="evidence" value="ECO:0000250"/>
    <property type="project" value="BHF-UCL"/>
</dbReference>
<dbReference type="GO" id="GO:0007160">
    <property type="term" value="P:cell-matrix adhesion"/>
    <property type="evidence" value="ECO:0000353"/>
    <property type="project" value="UniProtKB"/>
</dbReference>
<dbReference type="GO" id="GO:0042632">
    <property type="term" value="P:cholesterol homeostasis"/>
    <property type="evidence" value="ECO:0000314"/>
    <property type="project" value="BHF-UCL"/>
</dbReference>
<dbReference type="GO" id="GO:0008203">
    <property type="term" value="P:cholesterol metabolic process"/>
    <property type="evidence" value="ECO:0000314"/>
    <property type="project" value="BHF-UCL"/>
</dbReference>
<dbReference type="GO" id="GO:0006631">
    <property type="term" value="P:fatty acid metabolic process"/>
    <property type="evidence" value="ECO:0000314"/>
    <property type="project" value="BHF-UCL"/>
</dbReference>
<dbReference type="GO" id="GO:0006071">
    <property type="term" value="P:glycerol metabolic process"/>
    <property type="evidence" value="ECO:0000314"/>
    <property type="project" value="BHF-UCL"/>
</dbReference>
<dbReference type="GO" id="GO:0007229">
    <property type="term" value="P:integrin-mediated signaling pathway"/>
    <property type="evidence" value="ECO:0000303"/>
    <property type="project" value="UniProtKB"/>
</dbReference>
<dbReference type="GO" id="GO:0055088">
    <property type="term" value="P:lipid homeostasis"/>
    <property type="evidence" value="ECO:0000314"/>
    <property type="project" value="BHF-UCL"/>
</dbReference>
<dbReference type="GO" id="GO:0019915">
    <property type="term" value="P:lipid storage"/>
    <property type="evidence" value="ECO:0000314"/>
    <property type="project" value="BHF-UCL"/>
</dbReference>
<dbReference type="GO" id="GO:0010903">
    <property type="term" value="P:negative regulation of very-low-density lipoprotein particle remodeling"/>
    <property type="evidence" value="ECO:0000314"/>
    <property type="project" value="BHF-UCL"/>
</dbReference>
<dbReference type="GO" id="GO:0009395">
    <property type="term" value="P:phospholipid catabolic process"/>
    <property type="evidence" value="ECO:0000314"/>
    <property type="project" value="BHF-UCL"/>
</dbReference>
<dbReference type="GO" id="GO:0055091">
    <property type="term" value="P:phospholipid homeostasis"/>
    <property type="evidence" value="ECO:0000314"/>
    <property type="project" value="BHF-UCL"/>
</dbReference>
<dbReference type="GO" id="GO:0006644">
    <property type="term" value="P:phospholipid metabolic process"/>
    <property type="evidence" value="ECO:0000314"/>
    <property type="project" value="BHF-UCL"/>
</dbReference>
<dbReference type="GO" id="GO:0045766">
    <property type="term" value="P:positive regulation of angiogenesis"/>
    <property type="evidence" value="ECO:0000314"/>
    <property type="project" value="UniProtKB"/>
</dbReference>
<dbReference type="GO" id="GO:0030335">
    <property type="term" value="P:positive regulation of cell migration"/>
    <property type="evidence" value="ECO:0000314"/>
    <property type="project" value="UniProtKB"/>
</dbReference>
<dbReference type="GO" id="GO:0050996">
    <property type="term" value="P:positive regulation of lipid catabolic process"/>
    <property type="evidence" value="ECO:0000314"/>
    <property type="project" value="BHF-UCL"/>
</dbReference>
<dbReference type="GO" id="GO:0090318">
    <property type="term" value="P:regulation of chylomicron remodeling"/>
    <property type="evidence" value="ECO:0000314"/>
    <property type="project" value="BHF-UCL"/>
</dbReference>
<dbReference type="GO" id="GO:0009725">
    <property type="term" value="P:response to hormone"/>
    <property type="evidence" value="ECO:0007669"/>
    <property type="project" value="Ensembl"/>
</dbReference>
<dbReference type="GO" id="GO:0007165">
    <property type="term" value="P:signal transduction"/>
    <property type="evidence" value="ECO:0000314"/>
    <property type="project" value="BHF-UCL"/>
</dbReference>
<dbReference type="GO" id="GO:0070328">
    <property type="term" value="P:triglyceride homeostasis"/>
    <property type="evidence" value="ECO:0000316"/>
    <property type="project" value="MGI"/>
</dbReference>
<dbReference type="CDD" id="cd00087">
    <property type="entry name" value="FReD"/>
    <property type="match status" value="1"/>
</dbReference>
<dbReference type="DisProt" id="DP02665"/>
<dbReference type="FunFam" id="3.90.215.10:FF:000008">
    <property type="entry name" value="Angiopoietin like 3"/>
    <property type="match status" value="1"/>
</dbReference>
<dbReference type="Gene3D" id="3.90.215.10">
    <property type="entry name" value="Gamma Fibrinogen, chain A, domain 1"/>
    <property type="match status" value="1"/>
</dbReference>
<dbReference type="InterPro" id="IPR036056">
    <property type="entry name" value="Fibrinogen-like_C"/>
</dbReference>
<dbReference type="InterPro" id="IPR014716">
    <property type="entry name" value="Fibrinogen_a/b/g_C_1"/>
</dbReference>
<dbReference type="InterPro" id="IPR002181">
    <property type="entry name" value="Fibrinogen_a/b/g_C_dom"/>
</dbReference>
<dbReference type="InterPro" id="IPR050373">
    <property type="entry name" value="Fibrinogen_C-term_domain"/>
</dbReference>
<dbReference type="PANTHER" id="PTHR19143:SF222">
    <property type="entry name" value="ANGIOPOIETIN-RELATED PROTEIN 3"/>
    <property type="match status" value="1"/>
</dbReference>
<dbReference type="PANTHER" id="PTHR19143">
    <property type="entry name" value="FIBRINOGEN/TENASCIN/ANGIOPOEITIN"/>
    <property type="match status" value="1"/>
</dbReference>
<dbReference type="Pfam" id="PF00147">
    <property type="entry name" value="Fibrinogen_C"/>
    <property type="match status" value="1"/>
</dbReference>
<dbReference type="SMART" id="SM00186">
    <property type="entry name" value="FBG"/>
    <property type="match status" value="1"/>
</dbReference>
<dbReference type="SUPFAM" id="SSF56496">
    <property type="entry name" value="Fibrinogen C-terminal domain-like"/>
    <property type="match status" value="1"/>
</dbReference>
<dbReference type="PROSITE" id="PS51406">
    <property type="entry name" value="FIBRINOGEN_C_2"/>
    <property type="match status" value="1"/>
</dbReference>
<keyword id="KW-0002">3D-structure</keyword>
<keyword id="KW-0037">Angiogenesis</keyword>
<keyword id="KW-0130">Cell adhesion</keyword>
<keyword id="KW-0966">Cell projection</keyword>
<keyword id="KW-0175">Coiled coil</keyword>
<keyword id="KW-0903">Direct protein sequencing</keyword>
<keyword id="KW-1015">Disulfide bond</keyword>
<keyword id="KW-0325">Glycoprotein</keyword>
<keyword id="KW-0358">Heparin-binding</keyword>
<keyword id="KW-0443">Lipid metabolism</keyword>
<keyword id="KW-1267">Proteomics identification</keyword>
<keyword id="KW-1185">Reference proteome</keyword>
<keyword id="KW-0964">Secreted</keyword>
<keyword id="KW-0732">Signal</keyword>
<accession>Q9Y5C1</accession>
<accession>A0JLS0</accession>
<accession>B1ALJ0</accession>
<accession>B2RCW1</accession>
<protein>
    <recommendedName>
        <fullName>Angiopoietin-related protein 3</fullName>
    </recommendedName>
    <alternativeName>
        <fullName>Angiopoietin-5</fullName>
        <shortName>ANG-5</shortName>
    </alternativeName>
    <alternativeName>
        <fullName>Angiopoietin-like protein 3</fullName>
    </alternativeName>
    <component>
        <recommendedName>
            <fullName>ANGPTL3(17-221)</fullName>
        </recommendedName>
    </component>
    <component>
        <recommendedName>
            <fullName>ANGPTL3(17-224)</fullName>
        </recommendedName>
    </component>
</protein>
<comment type="function">
    <text evidence="2 6 8 9 10 13 15 18 20 26 27 37">Acts in part as a hepatokine that is involved in regulation of lipid and glucose metabolism (PubMed:11788823, PubMed:12909640, PubMed:23661675, PubMed:25495645). Proposed to play a role in the trafficking of energy substrates to either storage or oxidative tissues in response to food intake (By similarity). Has a stimulatory effect on plasma triglycerides (TG), which is achieved by suppressing plasma TG clearance via inhibition of LPL activity. The inhibition of LPL activity appears to be an indirect mechanism involving recruitment of proprotein convertases PCSK6 and FURIN to LPL leading to cleavage and dissociation of LPL from the cell surface; the function does not require ANGPTL3 proteolytic cleavage but seems to be mediated by the N-terminal domain, and is not inhibited by GPIHBP1 (PubMed:12097324, PubMed:19318355, PubMed:20581395). Can inhibit endothelial lipase, causing increased plasma levels of high density lipoprotein (HDL) cholesterol and phospholipids (PubMed:17110602, PubMed:19028676). Can bind to adipocytes to activate lipolysis, releasing free fatty acids and glycerol (PubMed:12565906). Suppresses LPL specifically in oxidative tissues which is required to route very low density lipoprotein (VLDL)-TG to white adipose tissue (WAT) for storage in response to food; the function may involve cooperation with circulating, liver-derived ANGPTL8 and ANGPTL4 expression in WAT (By similarity). Contributes to lower plasma levels of low density lipoprotein (LDL)-cholesterol by a mechanism that is independent of the canonical pathway implicating APOE and LDLR. May stimulate hypothalamic LPL activity (By similarity).</text>
</comment>
<comment type="function">
    <molecule>ANGPTL3(17-221)</molecule>
    <text evidence="19">In vitro inhibits LPL activity; not effective on GPIHBP1-stabilized LPL.</text>
</comment>
<comment type="function">
    <text evidence="2 7 14">Involved in angiogenesis. Binds to endothelial cells via integrin alpha-V/beta-3 (ITGAV:ITGB3), activates FAK, MAPK and Akt signaling pathways and induces cell adhesion and cell migration (PubMed:11877390). Secreted from podocytes, may modulate properties of glomerular endothelial cells involving integrin alpha-V/beta-3 and Akt signaling (PubMed:18535744). May increase the motility of podocytes. May induce actin filament rearrangements in podocytes implicating integrin alpha-V/beta-3 and Rac1 activation. Binds to hematopoietic stem cells (HSC) and is involved in the regulation of HSC activity probably implicating down-regulation of IKZF1/IKAROS (By similarity).</text>
</comment>
<comment type="subunit">
    <text evidence="2 25">Interacts with ANGPTL8. Interacts with ITGB3 (By similarity).</text>
</comment>
<comment type="subcellular location">
    <subcellularLocation>
        <location evidence="1 33">Secreted</location>
    </subcellularLocation>
    <subcellularLocation>
        <location evidence="2">Cell projection</location>
        <location evidence="2">Lamellipodium</location>
    </subcellularLocation>
    <text evidence="2">Colocalized with HSPG2 and activated ITGB3 on podocytes.</text>
</comment>
<comment type="tissue specificity">
    <text evidence="5 28 30">Expressed principally in liver. Weakly expressed in kidney. Binds to adipocytes. Increased expression and colocalization with activated ITGB3 in glomeruli of patients with nephrotic syndrome showing effaced podocyte foot processes (at protein level).</text>
</comment>
<comment type="induction">
    <text evidence="30">Down-regulated by insulin.</text>
</comment>
<comment type="domain">
    <text evidence="7">The fibrinogen C-terminal domain is sufficient to mediate endothelial cell adhesion.</text>
</comment>
<comment type="PTM">
    <text evidence="21 24">O-glycosylated at Thr-226 by GALNT2; blocks processing and activation by proprotein convertases.</text>
</comment>
<comment type="PTM">
    <text evidence="10 21">In part proteolytically cleaved by proprotein convertases; proposed to be involved in activation.</text>
</comment>
<comment type="disease" evidence="22">
    <disease id="DI-03014">
        <name>Hypobetalipoproteinemia, familial, 2</name>
        <acronym>FHBL2</acronym>
        <description>A disorder of lipid metabolism characterized by less than 5th percentile age- and sex-specific levels of low density lipoproteins, and dietary fat malabsorption. Affected individuals present with combined hypolipidemia, consisting of extremely low plasma levels of LDL cholesterol, HDL cholesterol, and triglycerides.</description>
        <dbReference type="MIM" id="605019"/>
    </disease>
    <text>The disease is caused by variants affecting the gene represented in this entry.</text>
</comment>
<comment type="disease">
    <text evidence="35">May be involved in atherosclerosis. Plasma levels are closely associated with arterial wall thickness.</text>
</comment>
<comment type="disease">
    <text evidence="38">May be involved in nephrotic syndrome.</text>
</comment>
<comment type="miscellaneous">
    <text evidence="36 37">Was suggested to inhibit LPL through a direct mechanism; however, the necessary concentration to achieve in vitro inhibition is at least 30-fold higher than ANGPTL3 plasma concentration.</text>
</comment>
<comment type="sequence caution" evidence="32">
    <conflict type="miscellaneous discrepancy">
        <sequence resource="EMBL-CDS" id="AAH07059"/>
    </conflict>
    <text>Contaminating sequence. Potential poly-A sequence.</text>
</comment>
<gene>
    <name type="primary">ANGPTL3</name>
    <name type="synonym">ANGPT5</name>
    <name type="ORF">UNQ153/PRO179</name>
</gene>
<feature type="signal peptide" evidence="11">
    <location>
        <begin position="1"/>
        <end position="16"/>
    </location>
</feature>
<feature type="chain" id="PRO_0000009122" description="Angiopoietin-related protein 3">
    <location>
        <begin position="17"/>
        <end position="460"/>
    </location>
</feature>
<feature type="chain" id="PRO_0000435903" description="ANGPTL3(17-224)" evidence="34">
    <location>
        <begin position="17"/>
        <end position="224"/>
    </location>
</feature>
<feature type="chain" id="PRO_0000435904" description="ANGPTL3(17-221)" evidence="34">
    <location>
        <begin position="17"/>
        <end position="221"/>
    </location>
</feature>
<feature type="domain" description="Fibrinogen C-terminal" evidence="4">
    <location>
        <begin position="237"/>
        <end position="455"/>
    </location>
</feature>
<feature type="region of interest" description="Sufficient to inhibit LIPG/EL phospholipase activity" evidence="13">
    <location>
        <begin position="17"/>
        <end position="207"/>
    </location>
</feature>
<feature type="region of interest" description="Sufficient to inhibit LPL lipase activity" evidence="10">
    <location>
        <begin position="17"/>
        <end position="165"/>
    </location>
</feature>
<feature type="region of interest" description="Required for inhibition of LPL lipase activity" evidence="18">
    <location>
        <begin position="32"/>
        <end position="56"/>
    </location>
</feature>
<feature type="coiled-coil region" evidence="3">
    <location>
        <begin position="85"/>
        <end position="210"/>
    </location>
</feature>
<feature type="glycosylation site" description="N-linked (GlcNAc...) asparagine" evidence="5 12">
    <location>
        <position position="115"/>
    </location>
</feature>
<feature type="glycosylation site" description="O-linked (GalNAc) threonine" evidence="21">
    <location>
        <position position="226"/>
    </location>
</feature>
<feature type="glycosylation site" description="N-linked (GlcNAc...) asparagine" evidence="12 17">
    <location>
        <position position="296"/>
    </location>
</feature>
<feature type="glycosylation site" description="N-linked (GlcNAc...) asparagine" evidence="12">
    <location>
        <position position="357"/>
    </location>
</feature>
<feature type="disulfide bond" evidence="4">
    <location>
        <begin position="246"/>
        <end position="274"/>
    </location>
</feature>
<feature type="disulfide bond" evidence="4">
    <location>
        <begin position="394"/>
        <end position="408"/>
    </location>
</feature>
<feature type="sequence variant" id="VAR_075670" description="Associated with low plasma triglyceride level; fails to suppress LPL activity in vitro; dbSNP:rs146749211." evidence="16">
    <original>K</original>
    <variation>T</variation>
    <location>
        <position position="63"/>
    </location>
</feature>
<feature type="sequence variant" id="VAR_075671" description="Associated with low plasma triglyceride level; fails to suppress LPL activity in vitro; dbSNP:rs139334976." evidence="16">
    <original>E</original>
    <variation>G</variation>
    <location>
        <position position="91"/>
    </location>
</feature>
<feature type="sequence variant" id="VAR_067283" description="In dbSNP:rs72649573." evidence="23">
    <original>L</original>
    <variation>F</variation>
    <location>
        <position position="127"/>
    </location>
</feature>
<feature type="sequence variant" id="VAR_075672" description="Associated with low plasma triglyceride level; fails to suppress LPL activity in vitro; dbSNP:rs775976787." evidence="16">
    <original>L</original>
    <variation>F</variation>
    <location>
        <position position="164"/>
    </location>
</feature>
<feature type="sequence variant" id="VAR_075673" description="Associated with low plasma triglyceride level; fails to suppress LPL activity in vitro; no effect on protein secretion; dbSNP:rs149624466." evidence="16 29">
    <original>N</original>
    <variation>S</variation>
    <location>
        <position position="173"/>
    </location>
</feature>
<feature type="sequence variant" id="VAR_075674" description="Common allele in African americans; associated with low plasma triglyceride level; fails to suppress LPL activity in vitro; no effect on protein folding; dbSNP:rs77871363." evidence="16 31">
    <original>M</original>
    <variation>T</variation>
    <location>
        <position position="259"/>
    </location>
</feature>
<feature type="sequence variant" id="VAR_075675" description="Abolishes protein secretion; associated with low plasma triglyceride level; dbSNP:rs763904695." evidence="16 31">
    <original>R</original>
    <variation>Q</variation>
    <location>
        <position position="288"/>
    </location>
</feature>
<feature type="sequence variant" id="VAR_075676" description="Abolishes protein secretion; associated with low plasma triglyceride level." evidence="16">
    <location>
        <position position="288"/>
    </location>
</feature>
<feature type="sequence variant" id="VAR_075677" description="Abolishes protein secretion; associated with low plasma triglyceride level; dbSNP:rs138899888." evidence="16 31">
    <original>S</original>
    <variation>P</variation>
    <location>
        <position position="292"/>
    </location>
</feature>
<feature type="sequence variant" id="VAR_075678" description="Abolishes protein secretion; associated with low plasma triglyceride level; dbSNP:rs1334979946." evidence="29 31">
    <original>Y</original>
    <variation>S</variation>
    <location>
        <position position="344"/>
    </location>
</feature>
<feature type="sequence variant" id="VAR_075679" description="Abolishes protein secretion; associated with low plasma triglyceride level; dbSNP:rs768802285." evidence="16 29 31">
    <original>E</original>
    <variation>K</variation>
    <location>
        <position position="375"/>
    </location>
</feature>
<feature type="sequence variant" id="VAR_075680" description="Abolishes protein secretion; associated with low plasma triglyceride level; dbSNP:rs376210525." evidence="16">
    <original>Y</original>
    <variation>C</variation>
    <location>
        <position position="417"/>
    </location>
</feature>
<feature type="sequence variant" id="VAR_049071" description="In dbSNP:rs4145257.">
    <original>N</original>
    <variation>Y</variation>
    <location>
        <position position="418"/>
    </location>
</feature>
<feature type="mutagenesis site" description="Abolishes effect on plasma triglyceride level; when associated with N-65." evidence="10">
    <original>HK</original>
    <variation>IN</variation>
    <location>
        <begin position="62"/>
        <end position="63"/>
    </location>
</feature>
<feature type="mutagenesis site" description="Abolishes inhibitory effect on LIPG/EL phospholipase activity; when associated with N-65." evidence="13">
    <original>K</original>
    <variation>N</variation>
    <location>
        <position position="63"/>
    </location>
</feature>
<feature type="mutagenesis site" description="Abolishes effect on plasma triglyceride level; when associated with 62-I-N-63." evidence="10">
    <original>K</original>
    <variation>N</variation>
    <location>
        <position position="65"/>
    </location>
</feature>
<feature type="mutagenesis site" description="Abolishes inhibitory effect on LIPG/EL phospholipase activity; when associated with N-63." evidence="13">
    <original>K</original>
    <variation>N</variation>
    <location>
        <position position="65"/>
    </location>
</feature>
<feature type="mutagenesis site" description="Abolishes proteolytical cleavage and effect on plasma triglyceride levels, keeps in vitro inactivation of LPL activity; when associated with S-221; S-224 and S-235." evidence="10">
    <original>RR</original>
    <variation>TT</variation>
    <location>
        <begin position="204"/>
        <end position="205"/>
    </location>
</feature>
<feature type="mutagenesis site" description="Abolishes proteolytical cleavage and effect on plasma triglyceride levels, keeps in vitro inactivation of LPL activity; when associated with 204-T-T-205; S-224 and S-235." evidence="10">
    <original>R</original>
    <variation>ST</variation>
    <location>
        <position position="221"/>
    </location>
</feature>
<feature type="mutagenesis site" description="Abolishes proteolytical cleavage and effect on plasma triglyceride levels, keeps in vitro inactivation of LPL activity; when associated with 204-T-T-205; S-221 and S-235." evidence="10">
    <original>R</original>
    <variation>S</variation>
    <location>
        <position position="224"/>
    </location>
</feature>
<feature type="mutagenesis site" description="Abolishes proteolytical cleavage and effect on plasma triglyceride levels, keeps in vitro inactivation of LPL activity; when associated with 204-T-T-205; S-221 and S-224." evidence="10">
    <original>R</original>
    <variation>T</variation>
    <location>
        <position position="235"/>
    </location>
</feature>
<feature type="sequence conflict" description="In Ref. 3; BAG37708." evidence="32" ref="3">
    <original>L</original>
    <variation>P</variation>
    <location>
        <position position="134"/>
    </location>
</feature>
<feature type="helix" evidence="40">
    <location>
        <begin position="246"/>
        <end position="251"/>
    </location>
</feature>
<feature type="strand" evidence="40">
    <location>
        <begin position="256"/>
        <end position="262"/>
    </location>
</feature>
<feature type="strand" evidence="40">
    <location>
        <begin position="270"/>
        <end position="277"/>
    </location>
</feature>
<feature type="strand" evidence="40">
    <location>
        <begin position="280"/>
        <end position="291"/>
    </location>
</feature>
<feature type="helix" evidence="40">
    <location>
        <begin position="299"/>
        <end position="304"/>
    </location>
</feature>
<feature type="strand" evidence="40">
    <location>
        <begin position="306"/>
        <end position="308"/>
    </location>
</feature>
<feature type="strand" evidence="40">
    <location>
        <begin position="311"/>
        <end position="314"/>
    </location>
</feature>
<feature type="helix" evidence="40">
    <location>
        <begin position="317"/>
        <end position="324"/>
    </location>
</feature>
<feature type="strand" evidence="40">
    <location>
        <begin position="329"/>
        <end position="337"/>
    </location>
</feature>
<feature type="strand" evidence="40">
    <location>
        <begin position="342"/>
        <end position="351"/>
    </location>
</feature>
<feature type="helix" evidence="40">
    <location>
        <begin position="354"/>
        <end position="356"/>
    </location>
</feature>
<feature type="strand" evidence="40">
    <location>
        <begin position="360"/>
        <end position="369"/>
    </location>
</feature>
<feature type="strand" evidence="40">
    <location>
        <begin position="375"/>
        <end position="377"/>
    </location>
</feature>
<feature type="strand" evidence="40">
    <location>
        <begin position="379"/>
        <end position="383"/>
    </location>
</feature>
<feature type="helix" evidence="40">
    <location>
        <begin position="395"/>
        <end position="397"/>
    </location>
</feature>
<feature type="strand" evidence="40">
    <location>
        <begin position="398"/>
        <end position="400"/>
    </location>
</feature>
<feature type="strand" evidence="40">
    <location>
        <begin position="402"/>
        <end position="404"/>
    </location>
</feature>
<feature type="strand" evidence="40">
    <location>
        <begin position="431"/>
        <end position="435"/>
    </location>
</feature>
<feature type="strand" evidence="40">
    <location>
        <begin position="437"/>
        <end position="439"/>
    </location>
</feature>
<feature type="strand" evidence="40">
    <location>
        <begin position="441"/>
        <end position="453"/>
    </location>
</feature>
<reference key="1">
    <citation type="journal article" date="1999" name="Genomics">
        <title>Identification of a mammalian angiopoietin-related protein expressed specifically in liver.</title>
        <authorList>
            <person name="Conklin D."/>
            <person name="Gilbertson D."/>
            <person name="Taft D.W."/>
            <person name="Maurer M.F."/>
            <person name="Whitmore T.E."/>
            <person name="Smith D.L."/>
            <person name="Walker K.M."/>
            <person name="Chen L.H."/>
            <person name="Wattler S."/>
            <person name="Nehls M."/>
            <person name="Lewis K.B."/>
        </authorList>
    </citation>
    <scope>NUCLEOTIDE SEQUENCE [MRNA]</scope>
    <scope>TISSUE SPECIFICITY</scope>
    <scope>GLYCOSYLATION AT ASN-115</scope>
    <source>
        <tissue>Liver</tissue>
    </source>
</reference>
<reference key="2">
    <citation type="journal article" date="2003" name="Genome Res.">
        <title>The secreted protein discovery initiative (SPDI), a large-scale effort to identify novel human secreted and transmembrane proteins: a bioinformatics assessment.</title>
        <authorList>
            <person name="Clark H.F."/>
            <person name="Gurney A.L."/>
            <person name="Abaya E."/>
            <person name="Baker K."/>
            <person name="Baldwin D.T."/>
            <person name="Brush J."/>
            <person name="Chen J."/>
            <person name="Chow B."/>
            <person name="Chui C."/>
            <person name="Crowley C."/>
            <person name="Currell B."/>
            <person name="Deuel B."/>
            <person name="Dowd P."/>
            <person name="Eaton D."/>
            <person name="Foster J.S."/>
            <person name="Grimaldi C."/>
            <person name="Gu Q."/>
            <person name="Hass P.E."/>
            <person name="Heldens S."/>
            <person name="Huang A."/>
            <person name="Kim H.S."/>
            <person name="Klimowski L."/>
            <person name="Jin Y."/>
            <person name="Johnson S."/>
            <person name="Lee J."/>
            <person name="Lewis L."/>
            <person name="Liao D."/>
            <person name="Mark M.R."/>
            <person name="Robbie E."/>
            <person name="Sanchez C."/>
            <person name="Schoenfeld J."/>
            <person name="Seshagiri S."/>
            <person name="Simmons L."/>
            <person name="Singh J."/>
            <person name="Smith V."/>
            <person name="Stinson J."/>
            <person name="Vagts A."/>
            <person name="Vandlen R.L."/>
            <person name="Watanabe C."/>
            <person name="Wieand D."/>
            <person name="Woods K."/>
            <person name="Xie M.-H."/>
            <person name="Yansura D.G."/>
            <person name="Yi S."/>
            <person name="Yu G."/>
            <person name="Yuan J."/>
            <person name="Zhang M."/>
            <person name="Zhang Z."/>
            <person name="Goddard A.D."/>
            <person name="Wood W.I."/>
            <person name="Godowski P.J."/>
            <person name="Gray A.M."/>
        </authorList>
    </citation>
    <scope>NUCLEOTIDE SEQUENCE [LARGE SCALE MRNA]</scope>
</reference>
<reference key="3">
    <citation type="journal article" date="2004" name="Nat. Genet.">
        <title>Complete sequencing and characterization of 21,243 full-length human cDNAs.</title>
        <authorList>
            <person name="Ota T."/>
            <person name="Suzuki Y."/>
            <person name="Nishikawa T."/>
            <person name="Otsuki T."/>
            <person name="Sugiyama T."/>
            <person name="Irie R."/>
            <person name="Wakamatsu A."/>
            <person name="Hayashi K."/>
            <person name="Sato H."/>
            <person name="Nagai K."/>
            <person name="Kimura K."/>
            <person name="Makita H."/>
            <person name="Sekine M."/>
            <person name="Obayashi M."/>
            <person name="Nishi T."/>
            <person name="Shibahara T."/>
            <person name="Tanaka T."/>
            <person name="Ishii S."/>
            <person name="Yamamoto J."/>
            <person name="Saito K."/>
            <person name="Kawai Y."/>
            <person name="Isono Y."/>
            <person name="Nakamura Y."/>
            <person name="Nagahari K."/>
            <person name="Murakami K."/>
            <person name="Yasuda T."/>
            <person name="Iwayanagi T."/>
            <person name="Wagatsuma M."/>
            <person name="Shiratori A."/>
            <person name="Sudo H."/>
            <person name="Hosoiri T."/>
            <person name="Kaku Y."/>
            <person name="Kodaira H."/>
            <person name="Kondo H."/>
            <person name="Sugawara M."/>
            <person name="Takahashi M."/>
            <person name="Kanda K."/>
            <person name="Yokoi T."/>
            <person name="Furuya T."/>
            <person name="Kikkawa E."/>
            <person name="Omura Y."/>
            <person name="Abe K."/>
            <person name="Kamihara K."/>
            <person name="Katsuta N."/>
            <person name="Sato K."/>
            <person name="Tanikawa M."/>
            <person name="Yamazaki M."/>
            <person name="Ninomiya K."/>
            <person name="Ishibashi T."/>
            <person name="Yamashita H."/>
            <person name="Murakawa K."/>
            <person name="Fujimori K."/>
            <person name="Tanai H."/>
            <person name="Kimata M."/>
            <person name="Watanabe M."/>
            <person name="Hiraoka S."/>
            <person name="Chiba Y."/>
            <person name="Ishida S."/>
            <person name="Ono Y."/>
            <person name="Takiguchi S."/>
            <person name="Watanabe S."/>
            <person name="Yosida M."/>
            <person name="Hotuta T."/>
            <person name="Kusano J."/>
            <person name="Kanehori K."/>
            <person name="Takahashi-Fujii A."/>
            <person name="Hara H."/>
            <person name="Tanase T.-O."/>
            <person name="Nomura Y."/>
            <person name="Togiya S."/>
            <person name="Komai F."/>
            <person name="Hara R."/>
            <person name="Takeuchi K."/>
            <person name="Arita M."/>
            <person name="Imose N."/>
            <person name="Musashino K."/>
            <person name="Yuuki H."/>
            <person name="Oshima A."/>
            <person name="Sasaki N."/>
            <person name="Aotsuka S."/>
            <person name="Yoshikawa Y."/>
            <person name="Matsunawa H."/>
            <person name="Ichihara T."/>
            <person name="Shiohata N."/>
            <person name="Sano S."/>
            <person name="Moriya S."/>
            <person name="Momiyama H."/>
            <person name="Satoh N."/>
            <person name="Takami S."/>
            <person name="Terashima Y."/>
            <person name="Suzuki O."/>
            <person name="Nakagawa S."/>
            <person name="Senoh A."/>
            <person name="Mizoguchi H."/>
            <person name="Goto Y."/>
            <person name="Shimizu F."/>
            <person name="Wakebe H."/>
            <person name="Hishigaki H."/>
            <person name="Watanabe T."/>
            <person name="Sugiyama A."/>
            <person name="Takemoto M."/>
            <person name="Kawakami B."/>
            <person name="Yamazaki M."/>
            <person name="Watanabe K."/>
            <person name="Kumagai A."/>
            <person name="Itakura S."/>
            <person name="Fukuzumi Y."/>
            <person name="Fujimori Y."/>
            <person name="Komiyama M."/>
            <person name="Tashiro H."/>
            <person name="Tanigami A."/>
            <person name="Fujiwara T."/>
            <person name="Ono T."/>
            <person name="Yamada K."/>
            <person name="Fujii Y."/>
            <person name="Ozaki K."/>
            <person name="Hirao M."/>
            <person name="Ohmori Y."/>
            <person name="Kawabata A."/>
            <person name="Hikiji T."/>
            <person name="Kobatake N."/>
            <person name="Inagaki H."/>
            <person name="Ikema Y."/>
            <person name="Okamoto S."/>
            <person name="Okitani R."/>
            <person name="Kawakami T."/>
            <person name="Noguchi S."/>
            <person name="Itoh T."/>
            <person name="Shigeta K."/>
            <person name="Senba T."/>
            <person name="Matsumura K."/>
            <person name="Nakajima Y."/>
            <person name="Mizuno T."/>
            <person name="Morinaga M."/>
            <person name="Sasaki M."/>
            <person name="Togashi T."/>
            <person name="Oyama M."/>
            <person name="Hata H."/>
            <person name="Watanabe M."/>
            <person name="Komatsu T."/>
            <person name="Mizushima-Sugano J."/>
            <person name="Satoh T."/>
            <person name="Shirai Y."/>
            <person name="Takahashi Y."/>
            <person name="Nakagawa K."/>
            <person name="Okumura K."/>
            <person name="Nagase T."/>
            <person name="Nomura N."/>
            <person name="Kikuchi H."/>
            <person name="Masuho Y."/>
            <person name="Yamashita R."/>
            <person name="Nakai K."/>
            <person name="Yada T."/>
            <person name="Nakamura Y."/>
            <person name="Ohara O."/>
            <person name="Isogai T."/>
            <person name="Sugano S."/>
        </authorList>
    </citation>
    <scope>NUCLEOTIDE SEQUENCE [LARGE SCALE MRNA]</scope>
    <source>
        <tissue>Liver</tissue>
    </source>
</reference>
<reference key="4">
    <citation type="submission" date="2004-03" db="EMBL/GenBank/DDBJ databases">
        <authorList>
            <consortium name="SeattleSNPs variation discovery resource"/>
        </authorList>
    </citation>
    <scope>NUCLEOTIDE SEQUENCE [GENOMIC DNA]</scope>
</reference>
<reference key="5">
    <citation type="submission" date="2007-02" db="EMBL/GenBank/DDBJ databases">
        <authorList>
            <consortium name="NHLBI resequencing and genotyping service (RS&amp;G)"/>
        </authorList>
    </citation>
    <scope>NUCLEOTIDE SEQUENCE [GENOMIC DNA]</scope>
</reference>
<reference key="6">
    <citation type="submission" date="2005-09" db="EMBL/GenBank/DDBJ databases">
        <authorList>
            <person name="Mural R.J."/>
            <person name="Istrail S."/>
            <person name="Sutton G."/>
            <person name="Florea L."/>
            <person name="Halpern A.L."/>
            <person name="Mobarry C.M."/>
            <person name="Lippert R."/>
            <person name="Walenz B."/>
            <person name="Shatkay H."/>
            <person name="Dew I."/>
            <person name="Miller J.R."/>
            <person name="Flanigan M.J."/>
            <person name="Edwards N.J."/>
            <person name="Bolanos R."/>
            <person name="Fasulo D."/>
            <person name="Halldorsson B.V."/>
            <person name="Hannenhalli S."/>
            <person name="Turner R."/>
            <person name="Yooseph S."/>
            <person name="Lu F."/>
            <person name="Nusskern D.R."/>
            <person name="Shue B.C."/>
            <person name="Zheng X.H."/>
            <person name="Zhong F."/>
            <person name="Delcher A.L."/>
            <person name="Huson D.H."/>
            <person name="Kravitz S.A."/>
            <person name="Mouchard L."/>
            <person name="Reinert K."/>
            <person name="Remington K.A."/>
            <person name="Clark A.G."/>
            <person name="Waterman M.S."/>
            <person name="Eichler E.E."/>
            <person name="Adams M.D."/>
            <person name="Hunkapiller M.W."/>
            <person name="Myers E.W."/>
            <person name="Venter J.C."/>
        </authorList>
    </citation>
    <scope>NUCLEOTIDE SEQUENCE [LARGE SCALE GENOMIC DNA]</scope>
</reference>
<reference key="7">
    <citation type="journal article" date="2004" name="Genome Res.">
        <title>The status, quality, and expansion of the NIH full-length cDNA project: the Mammalian Gene Collection (MGC).</title>
        <authorList>
            <consortium name="The MGC Project Team"/>
        </authorList>
    </citation>
    <scope>NUCLEOTIDE SEQUENCE [LARGE SCALE MRNA]</scope>
    <source>
        <tissue>Liver</tissue>
        <tissue>Skeletal muscle</tissue>
    </source>
</reference>
<reference key="8">
    <citation type="journal article" date="2004" name="Protein Sci.">
        <title>Signal peptide prediction based on analysis of experimentally verified cleavage sites.</title>
        <authorList>
            <person name="Zhang Z."/>
            <person name="Henzel W.J."/>
        </authorList>
    </citation>
    <scope>PROTEIN SEQUENCE OF 17-31</scope>
</reference>
<reference key="9">
    <citation type="journal article" date="2002" name="J. Biol. Chem.">
        <title>ANGPTL3 stimulates endothelial cell adhesion and migration via integrin alpha vbeta 3 and induces blood vessel formation in vivo.</title>
        <authorList>
            <person name="Camenisch G."/>
            <person name="Pisabarro M.T."/>
            <person name="Sherman D."/>
            <person name="Kowalski J."/>
            <person name="Nagel M."/>
            <person name="Hass P."/>
            <person name="Xie M.H."/>
            <person name="Gurney A."/>
            <person name="Bodary S."/>
            <person name="Liang X.H."/>
            <person name="Clark K."/>
            <person name="Beresini M."/>
            <person name="Ferrara N."/>
            <person name="Gerber H.P."/>
        </authorList>
    </citation>
    <scope>FUNCTION</scope>
    <scope>GLYCOSYLATION</scope>
    <scope>SUBCELLULAR LOCATION</scope>
    <scope>DOMAIN</scope>
</reference>
<reference key="10">
    <citation type="journal article" date="2002" name="J. Biol. Chem.">
        <title>ANGPTL3 decreases very low density lipoprotein triglyceride clearance by inhibition of lipoprotein lipase.</title>
        <authorList>
            <person name="Shimizugawa T."/>
            <person name="Ono M."/>
            <person name="Shimamura M."/>
            <person name="Yoshida K."/>
            <person name="Ando Y."/>
            <person name="Koishi R."/>
            <person name="Ueda K."/>
            <person name="Inaba T."/>
            <person name="Minekura H."/>
            <person name="Kohama T."/>
            <person name="Furukawa H."/>
        </authorList>
    </citation>
    <scope>FUNCTION</scope>
</reference>
<reference key="11">
    <citation type="journal article" date="2002" name="Nat. Genet.">
        <title>Angptl3 regulates lipid metabolism in mice.</title>
        <authorList>
            <person name="Koishi R."/>
            <person name="Ando Y."/>
            <person name="Ono M."/>
            <person name="Shimamura M."/>
            <person name="Yasumo H."/>
            <person name="Fujiwara T."/>
            <person name="Horikoshi H."/>
            <person name="Furukawa H."/>
        </authorList>
    </citation>
    <scope>FUNCTION</scope>
</reference>
<reference key="12">
    <citation type="journal article" date="2003" name="Biochem. Biophys. Res. Commun.">
        <title>Angiopoietin-like protein 3, a hepatic secretory factor, activates lipolysis in adipocytes.</title>
        <authorList>
            <person name="Shimamura M."/>
            <person name="Matsuda M."/>
            <person name="Kobayashi S."/>
            <person name="Ando Y."/>
            <person name="Ono M."/>
            <person name="Koishi R."/>
            <person name="Furukawa H."/>
            <person name="Makishima M."/>
            <person name="Shimomura I."/>
        </authorList>
    </citation>
    <scope>FUNCTION</scope>
    <scope>TISSUE SPECIFICITY</scope>
</reference>
<reference key="13">
    <citation type="journal article" date="2003" name="J. Biol. Chem.">
        <title>Protein region important for regulation of lipid metabolism in angiopoietin-like 3 (ANGPTL3): ANGPTL3 is cleaved and activated in vivo.</title>
        <authorList>
            <person name="Ono M."/>
            <person name="Shimizugawa T."/>
            <person name="Shimamura M."/>
            <person name="Yoshida K."/>
            <person name="Noji-Sakikawa C."/>
            <person name="Ando Y."/>
            <person name="Koishi R."/>
            <person name="Furukawa H."/>
        </authorList>
    </citation>
    <scope>PROTEOLYTIC CLEAVAGE</scope>
    <scope>FUNCTION</scope>
    <scope>MUTAGENESIS OF 62-HIS-LYS-63; LYS-65; 204-ARG-ARG-205; ARG-221; ARG-224 AND ARG-235</scope>
</reference>
<reference key="14">
    <citation type="journal article" date="2005" name="J. Proteome Res.">
        <title>Human plasma N-glycoproteome analysis by immunoaffinity subtraction, hydrazide chemistry, and mass spectrometry.</title>
        <authorList>
            <person name="Liu T."/>
            <person name="Qian W.-J."/>
            <person name="Gritsenko M.A."/>
            <person name="Camp D.G. II"/>
            <person name="Monroe M.E."/>
            <person name="Moore R.J."/>
            <person name="Smith R.D."/>
        </authorList>
    </citation>
    <scope>GLYCOSYLATION [LARGE SCALE ANALYSIS] AT ASN-115; ASN-296 AND ASN-357</scope>
    <source>
        <tissue>Plasma</tissue>
    </source>
</reference>
<reference key="15">
    <citation type="journal article" date="2007" name="Arterioscler. Thromb. Vasc. Biol.">
        <title>Angiopoietin-like protein3 regulates plasma HDL cholesterol through suppression of endothelial lipase.</title>
        <authorList>
            <person name="Shimamura M."/>
            <person name="Matsuda M."/>
            <person name="Yasumo H."/>
            <person name="Okazaki M."/>
            <person name="Fujimoto K."/>
            <person name="Kono K."/>
            <person name="Shimizugawa T."/>
            <person name="Ando Y."/>
            <person name="Koishi R."/>
            <person name="Kohama T."/>
            <person name="Sakai N."/>
            <person name="Kotani K."/>
            <person name="Komuro R."/>
            <person name="Ishida T."/>
            <person name="Hirata K."/>
            <person name="Yamashita S."/>
            <person name="Furukawa H."/>
            <person name="Shimomura I."/>
        </authorList>
    </citation>
    <scope>FUNCTION</scope>
</reference>
<reference key="16">
    <citation type="journal article" date="2007" name="J. Vasc. Res.">
        <title>Association between plasma angiopoietin-like protein 3 and arterial wall thickness in healthy subjects.</title>
        <authorList>
            <person name="Hatsuda S."/>
            <person name="Shoji T."/>
            <person name="Shinohara K."/>
            <person name="Kimoto E."/>
            <person name="Mori K."/>
            <person name="Fukumoto S."/>
            <person name="Koyama H."/>
            <person name="Emoto M."/>
            <person name="Nishizawa Y."/>
        </authorList>
    </citation>
    <scope>POSSIBLE INVOLVEMENT IN ATHEROSCLEROSIS</scope>
</reference>
<reference key="17">
    <citation type="journal article" date="2008" name="Acta Biochim. Biophys. Sin.">
        <title>Angiopoietin-like protein 3 modulates barrier properties of human glomerular endothelial cells through a possible signaling pathway involving phosphatidylinositol-3 kinase/protein kinase B and integrin alphaVbeta3.</title>
        <authorList>
            <person name="Li Y."/>
            <person name="Sun L."/>
            <person name="Xu H."/>
            <person name="Fang Z."/>
            <person name="Yao W."/>
            <person name="Guo W."/>
            <person name="Rao J."/>
            <person name="Zha X."/>
        </authorList>
    </citation>
    <scope>FUNCTION</scope>
</reference>
<reference key="18">
    <citation type="journal article" date="2009" name="J. Biol. Chem.">
        <title>The angiopoietin-like proteins ANGPTL3 and ANGPTL4 inhibit lipoprotein lipase activity through distinct mechanisms.</title>
        <authorList>
            <person name="Shan L."/>
            <person name="Yu X.C."/>
            <person name="Liu Z."/>
            <person name="Hu Y."/>
            <person name="Sturgis L.T."/>
            <person name="Miranda M.L."/>
            <person name="Liu Q."/>
        </authorList>
    </citation>
    <scope>FUNCTION</scope>
</reference>
<reference key="19">
    <citation type="journal article" date="2009" name="J. Biol. Chem.">
        <title>Identification of a new functional domain in angiopoietin-like 3 (ANGPTL3) and angiopoietin-like 4 (ANGPTL4) involved in binding and inhibition of lipoprotein lipase (LPL).</title>
        <authorList>
            <person name="Lee E.C."/>
            <person name="Desai U."/>
            <person name="Gololobov G."/>
            <person name="Hong S."/>
            <person name="Feng X."/>
            <person name="Yu X.C."/>
            <person name="Gay J."/>
            <person name="Wilganowski N."/>
            <person name="Gao C."/>
            <person name="Du L.L."/>
            <person name="Chen J."/>
            <person name="Hu Y."/>
            <person name="Zhao S."/>
            <person name="Kirkpatrick L."/>
            <person name="Schneider M."/>
            <person name="Zambrowicz B.P."/>
            <person name="Landes G."/>
            <person name="Powell D.R."/>
            <person name="Sonnenburg W.K."/>
        </authorList>
    </citation>
    <scope>FUNCTION</scope>
</reference>
<reference key="20">
    <citation type="journal article" date="2009" name="J. Lipid Res.">
        <title>GPIHBP1 stabilizes lipoprotein lipase and prevents its inhibition by angiopoietin-like 3 and angiopoietin-like 4.</title>
        <authorList>
            <person name="Sonnenburg W.K."/>
            <person name="Yu D."/>
            <person name="Lee E.C."/>
            <person name="Xiong W."/>
            <person name="Gololobov G."/>
            <person name="Key B."/>
            <person name="Gay J."/>
            <person name="Wilganowski N."/>
            <person name="Hu Y."/>
            <person name="Zhao S."/>
            <person name="Schneider M."/>
            <person name="Ding Z.M."/>
            <person name="Zambrowicz B.P."/>
            <person name="Landes G."/>
            <person name="Powell D.R."/>
            <person name="Desai U."/>
        </authorList>
    </citation>
    <scope>FUNCTION (ANGPTL3(17-221))</scope>
</reference>
<reference key="21">
    <citation type="journal article" date="2009" name="J. Proteome Res.">
        <title>Glycoproteomics analysis of human liver tissue by combination of multiple enzyme digestion and hydrazide chemistry.</title>
        <authorList>
            <person name="Chen R."/>
            <person name="Jiang X."/>
            <person name="Sun D."/>
            <person name="Han G."/>
            <person name="Wang F."/>
            <person name="Ye M."/>
            <person name="Wang L."/>
            <person name="Zou H."/>
        </authorList>
    </citation>
    <scope>GLYCOSYLATION [LARGE SCALE ANALYSIS] AT ASN-296</scope>
    <source>
        <tissue>Liver</tissue>
    </source>
</reference>
<reference key="22">
    <citation type="journal article" date="2010" name="J. Biol. Chem.">
        <title>Angiopoietin-like protein 3 inhibits lipoprotein lipase activity through enhancing its cleavage by proprotein convertases.</title>
        <authorList>
            <person name="Liu J."/>
            <person name="Afroza H."/>
            <person name="Rader D.J."/>
            <person name="Jin W."/>
        </authorList>
    </citation>
    <scope>FUNCTION</scope>
</reference>
<reference key="23">
    <citation type="journal article" date="2010" name="J. Biol. Chem.">
        <title>O-glycosylation modulates proprotein convertase activation of angiopoietin-like protein 3: possible role of polypeptide GalNAc-transferase-2 in regulation of concentrations of plasma lipids.</title>
        <authorList>
            <person name="Schjoldager K.T."/>
            <person name="Vester-Christensen M.B."/>
            <person name="Bennett E.P."/>
            <person name="Levery S.B."/>
            <person name="Schwientek T."/>
            <person name="Yin W."/>
            <person name="Blixt O."/>
            <person name="Clausen H."/>
        </authorList>
    </citation>
    <scope>GLYCOSYLATION AT THR-226</scope>
</reference>
<reference key="24">
    <citation type="journal article" date="2010" name="N. Engl. J. Med.">
        <title>Exome sequencing, ANGPTL3 mutations, and familial combined hypolipidemia.</title>
        <authorList>
            <person name="Musunuru K."/>
            <person name="Pirruccello J.P."/>
            <person name="Do R."/>
            <person name="Peloso G.M."/>
            <person name="Guiducci C."/>
            <person name="Sougnez C."/>
            <person name="Garimella K.V."/>
            <person name="Fisher S."/>
            <person name="Abreu J."/>
            <person name="Barry A.J."/>
            <person name="Fennell T."/>
            <person name="Banks E."/>
            <person name="Ambrogio L."/>
            <person name="Cibulskis K."/>
            <person name="Kernytsky A."/>
            <person name="Gonzalez E."/>
            <person name="Rudzicz N."/>
            <person name="Engert J.C."/>
            <person name="DePristo M.A."/>
            <person name="Daly M.J."/>
            <person name="Cohen J.C."/>
            <person name="Hobbs H.H."/>
            <person name="Altshuler D."/>
            <person name="Schonfeld G."/>
            <person name="Gabriel S.B."/>
            <person name="Yue P."/>
            <person name="Kathiresan S."/>
        </authorList>
    </citation>
    <scope>INVOLVEMENT IN FHBL2</scope>
</reference>
<reference key="25">
    <citation type="journal article" date="2012" name="Proc. Natl. Acad. Sci. U.S.A.">
        <title>Probing isoform-specific functions of polypeptide GalNAc-transferases using zinc finger nuclease glycoengineered SimpleCells.</title>
        <authorList>
            <person name="Schjoldager K.T."/>
            <person name="Vakhrushev S.Y."/>
            <person name="Kong Y."/>
            <person name="Steentoft C."/>
            <person name="Nudelman A.S."/>
            <person name="Pedersen N.B."/>
            <person name="Wandall H.H."/>
            <person name="Mandel U."/>
            <person name="Bennett E.P."/>
            <person name="Levery S.B."/>
            <person name="Clausen H."/>
        </authorList>
    </citation>
    <scope>GLYCOSYLATION</scope>
</reference>
<reference key="26">
    <citation type="journal article" date="2012" name="Proc. Natl. Acad. Sci. U.S.A.">
        <title>Atypical angiopoietin-like protein that regulates ANGPTL3.</title>
        <authorList>
            <person name="Quagliarini F."/>
            <person name="Wang Y."/>
            <person name="Kozlitina J."/>
            <person name="Grishin N.V."/>
            <person name="Hyde R."/>
            <person name="Boerwinkle E."/>
            <person name="Valenzuela D.M."/>
            <person name="Murphy A.J."/>
            <person name="Cohen J.C."/>
            <person name="Hobbs H.H."/>
        </authorList>
    </citation>
    <scope>INTERACTION WITH ANGPTL8</scope>
</reference>
<reference key="27">
    <citation type="journal article" date="2013" name="Arterioscler. Thromb. Vasc. Biol.">
        <title>Angptl3 deficiency is associated with increased insulin sensitivity, lipoprotein lipase activity, and decreased serum free fatty acids.</title>
        <authorList>
            <person name="Robciuc M.R."/>
            <person name="Maranghi M."/>
            <person name="Lahikainen A."/>
            <person name="Rader D."/>
            <person name="Bensadoun A."/>
            <person name="Oeoerni K."/>
            <person name="Ooerni K."/>
            <person name="Metso J."/>
            <person name="Minicocci I."/>
            <person name="Ciociola E."/>
            <person name="Ceci F."/>
            <person name="Montali A."/>
            <person name="Arca M."/>
            <person name="Ehnholm C."/>
            <person name="Jauhiainen M."/>
        </authorList>
    </citation>
    <scope>FUNCTION</scope>
</reference>
<reference key="28">
    <citation type="journal article" date="2014" name="Biosci. Rep.">
        <title>Silencing of ANGPTL 3 (angiopoietin-like protein 3) in human hepatocytes results in decreased expression of gluconeogenic genes and reduced triacylglycerol-rich VLDL secretion upon insulin stimulation.</title>
        <authorList>
            <person name="Tikka A."/>
            <person name="Soronen J."/>
            <person name="Laurila P.P."/>
            <person name="Metso J."/>
            <person name="Ehnholm C."/>
            <person name="Jauhiainen M."/>
        </authorList>
    </citation>
    <scope>FUNCTION</scope>
</reference>
<reference key="29">
    <citation type="journal article" date="2015" name="J. Clin. Endocrinol. Metab.">
        <title>Regulation of Angiopoietin-Like Proteins (ANGPTLs) 3 and 8 by Insulin.</title>
        <authorList>
            <person name="Nidhina Haridas P.A."/>
            <person name="Soronen J."/>
            <person name="Saedevirta S."/>
            <person name="Mysore R."/>
            <person name="Quagliarini F."/>
            <person name="Pasternack A."/>
            <person name="Metso J."/>
            <person name="Perttilae J."/>
            <person name="Leivonen M."/>
            <person name="Smas C.M."/>
            <person name="Fischer-Posovszky P."/>
            <person name="Wabitsch M."/>
            <person name="Ehnholm C."/>
            <person name="Ritvos O."/>
            <person name="Jauhiainen M."/>
            <person name="Olkkonen V.M."/>
            <person name="Yki-Jaervinen H."/>
        </authorList>
    </citation>
    <scope>TISSUE SPECIFICITY</scope>
    <scope>INDUCTION</scope>
</reference>
<reference evidence="39" key="30">
    <citation type="journal article" date="2018" name="Sci. Rep.">
        <title>Structures of Angptl3 and Angptl4, modulators of triglyceride levels and coronary artery disease.</title>
        <authorList>
            <person name="Biterova E."/>
            <person name="Esmaeeli M."/>
            <person name="Alanen H.I."/>
            <person name="Saaranen M."/>
            <person name="Ruddock L.W."/>
        </authorList>
    </citation>
    <scope>X-RAY CRYSTALLOGRAPHY (2.10 ANGSTROMS) OF 242-460</scope>
    <scope>DISULFIDE BONDS</scope>
    <scope>CHARACTERIZATION OF VARIANTS THR-259; GLN-288; PRO-292; SER-344 AND LYS-375</scope>
</reference>
<reference key="31">
    <citation type="journal article" date="2012" name="Hum. Mutat.">
        <title>Genetic variation in APOB, PCSK9, and ANGPTL3 in carriers of pathogenic autosomal dominant hypercholesterolemic mutations with unexpected low LDL-Cl Levels.</title>
        <authorList>
            <person name="Huijgen R."/>
            <person name="Sjouke B."/>
            <person name="Vis K."/>
            <person name="de Randamie J.S."/>
            <person name="Defesche J.C."/>
            <person name="Kastelein J.J."/>
            <person name="Hovingh G.K."/>
            <person name="Fouchier S.W."/>
        </authorList>
    </citation>
    <scope>VARIANT PHE-127</scope>
</reference>
<reference key="32">
    <citation type="journal article" date="2009" name="J. Clin. Invest.">
        <title>Rare loss-of-function mutations in ANGPTL family members contribute to plasma triglyceride levels in humans.</title>
        <authorList>
            <person name="Romeo S."/>
            <person name="Yin W."/>
            <person name="Kozlitina J."/>
            <person name="Pennacchio L.A."/>
            <person name="Boerwinkle E."/>
            <person name="Hobbs H.H."/>
            <person name="Cohen J.C."/>
        </authorList>
    </citation>
    <scope>VARIANTS THR-63; GLY-91; PHE-164; SER-173; THR-259; GLN-288; PRO-292; LYS-375 AND CYS-417</scope>
    <scope>CHARACTERIZATION OF VARIANTS THR-63; GLY-91; PHE-164; SER-173; THR-259; ARG-GLN; PRO-292; LYS-375 AND CYS-417</scope>
</reference>
<reference key="33">
    <citation type="journal article" date="2015" name="Atherosclerosis">
        <title>Clinical and genetic analysis of a family diagnosed with familial hypobetalipoproteinemia in which the proband was diagnosed with diabetes mellitus.</title>
        <authorList>
            <person name="Wang X."/>
            <person name="Wang D."/>
            <person name="Shan Z."/>
        </authorList>
    </citation>
    <scope>VARIANT SER-344</scope>
    <scope>CHARACTERIZATION OF VARIANTS SER-173; SER-344 AND LYS-375</scope>
</reference>
<reference key="34">
    <citation type="journal article" date="2015" name="Pediatr. Res.">
        <title>A novel role of angiopoietin-like-3 associated with podocyte injury.</title>
        <authorList>
            <person name="Liu J."/>
            <person name="Gao X."/>
            <person name="Zhai Y."/>
            <person name="Shen Q."/>
            <person name="Sun L."/>
            <person name="Feng C."/>
            <person name="Rao J."/>
            <person name="Liu H."/>
            <person name="Zha X."/>
            <person name="Guo M."/>
            <person name="Ma D."/>
            <person name="Zhang Z."/>
            <person name="Li R."/>
            <person name="Xu H."/>
        </authorList>
    </citation>
    <scope>TISSUE SPECIFICITY</scope>
    <scope>SUBCELLULAR LOCATION</scope>
    <scope>POSSIBLE INVOLVEMENT IN NEPHROTIC SYNDROME</scope>
</reference>
<name>ANGL3_HUMAN</name>
<sequence length="460" mass="53637">MFTIKLLLFIVPLVISSRIDQDNSSFDSLSPEPKSRFAMLDDVKILANGLLQLGHGLKDFVHKTKGQINDIFQKLNIFDQSFYDLSLQTSEIKEEEKELRRTTYKLQVKNEEVKNMSLELNSKLESLLEEKILLQQKVKYLEEQLTNLIQNQPETPEHPEVTSLKTFVEKQDNSIKDLLQTVEDQYKQLNQQHSQIKEIENQLRRTSIQEPTEISLSSKPRAPRTTPFLQLNEIRNVKHDGIPAECTTIYNRGEHTSGMYAIRPSNSQVFHVYCDVISGSPWTLIQHRIDGSQNFNETWENYKYGFGRLDGEFWLGLEKIYSIVKQSNYVLRIELEDWKDNKHYIEYSFYLGNHETNYTLHLVAITGNVPNAIPENKDLVFSTWDHKAKGHFNCPEGYSGGWWWHDECGENNLNGKYNKPRAKSKPERRRGLSWKSQNGRLYSIKSTKMLIHPTDSESFE</sequence>
<organism>
    <name type="scientific">Homo sapiens</name>
    <name type="common">Human</name>
    <dbReference type="NCBI Taxonomy" id="9606"/>
    <lineage>
        <taxon>Eukaryota</taxon>
        <taxon>Metazoa</taxon>
        <taxon>Chordata</taxon>
        <taxon>Craniata</taxon>
        <taxon>Vertebrata</taxon>
        <taxon>Euteleostomi</taxon>
        <taxon>Mammalia</taxon>
        <taxon>Eutheria</taxon>
        <taxon>Euarchontoglires</taxon>
        <taxon>Primates</taxon>
        <taxon>Haplorrhini</taxon>
        <taxon>Catarrhini</taxon>
        <taxon>Hominidae</taxon>
        <taxon>Homo</taxon>
    </lineage>
</organism>
<proteinExistence type="evidence at protein level"/>
<evidence type="ECO:0000250" key="1"/>
<evidence type="ECO:0000250" key="2">
    <source>
        <dbReference type="UniProtKB" id="Q9R182"/>
    </source>
</evidence>
<evidence type="ECO:0000255" key="3"/>
<evidence type="ECO:0000255" key="4">
    <source>
        <dbReference type="PROSITE-ProRule" id="PRU00739"/>
    </source>
</evidence>
<evidence type="ECO:0000269" key="5">
    <source>
    </source>
</evidence>
<evidence type="ECO:0000269" key="6">
    <source>
    </source>
</evidence>
<evidence type="ECO:0000269" key="7">
    <source>
    </source>
</evidence>
<evidence type="ECO:0000269" key="8">
    <source>
    </source>
</evidence>
<evidence type="ECO:0000269" key="9">
    <source>
    </source>
</evidence>
<evidence type="ECO:0000269" key="10">
    <source>
    </source>
</evidence>
<evidence type="ECO:0000269" key="11">
    <source>
    </source>
</evidence>
<evidence type="ECO:0000269" key="12">
    <source>
    </source>
</evidence>
<evidence type="ECO:0000269" key="13">
    <source>
    </source>
</evidence>
<evidence type="ECO:0000269" key="14">
    <source>
    </source>
</evidence>
<evidence type="ECO:0000269" key="15">
    <source>
    </source>
</evidence>
<evidence type="ECO:0000269" key="16">
    <source>
    </source>
</evidence>
<evidence type="ECO:0000269" key="17">
    <source>
    </source>
</evidence>
<evidence type="ECO:0000269" key="18">
    <source>
    </source>
</evidence>
<evidence type="ECO:0000269" key="19">
    <source>
    </source>
</evidence>
<evidence type="ECO:0000269" key="20">
    <source>
    </source>
</evidence>
<evidence type="ECO:0000269" key="21">
    <source>
    </source>
</evidence>
<evidence type="ECO:0000269" key="22">
    <source>
    </source>
</evidence>
<evidence type="ECO:0000269" key="23">
    <source>
    </source>
</evidence>
<evidence type="ECO:0000269" key="24">
    <source>
    </source>
</evidence>
<evidence type="ECO:0000269" key="25">
    <source>
    </source>
</evidence>
<evidence type="ECO:0000269" key="26">
    <source>
    </source>
</evidence>
<evidence type="ECO:0000269" key="27">
    <source>
    </source>
</evidence>
<evidence type="ECO:0000269" key="28">
    <source>
    </source>
</evidence>
<evidence type="ECO:0000269" key="29">
    <source>
    </source>
</evidence>
<evidence type="ECO:0000269" key="30">
    <source>
    </source>
</evidence>
<evidence type="ECO:0000269" key="31">
    <source>
    </source>
</evidence>
<evidence type="ECO:0000305" key="32"/>
<evidence type="ECO:0000305" key="33">
    <source>
    </source>
</evidence>
<evidence type="ECO:0000305" key="34">
    <source>
    </source>
</evidence>
<evidence type="ECO:0000305" key="35">
    <source>
    </source>
</evidence>
<evidence type="ECO:0000305" key="36">
    <source>
    </source>
</evidence>
<evidence type="ECO:0000305" key="37">
    <source>
    </source>
</evidence>
<evidence type="ECO:0000305" key="38">
    <source>
    </source>
</evidence>
<evidence type="ECO:0007744" key="39">
    <source>
        <dbReference type="PDB" id="6EUA"/>
    </source>
</evidence>
<evidence type="ECO:0007829" key="40">
    <source>
        <dbReference type="PDB" id="6EUA"/>
    </source>
</evidence>